<proteinExistence type="inferred from homology"/>
<dbReference type="EMBL" id="CP001138">
    <property type="protein sequence ID" value="ACH52721.1"/>
    <property type="molecule type" value="Genomic_DNA"/>
</dbReference>
<dbReference type="RefSeq" id="WP_000847722.1">
    <property type="nucleotide sequence ID" value="NC_011149.1"/>
</dbReference>
<dbReference type="KEGG" id="sea:SeAg_B1035"/>
<dbReference type="HOGENOM" id="CLU_073782_2_0_6"/>
<dbReference type="Proteomes" id="UP000008819">
    <property type="component" value="Chromosome"/>
</dbReference>
<dbReference type="HAMAP" id="MF_00789">
    <property type="entry name" value="UPF0319"/>
    <property type="match status" value="1"/>
</dbReference>
<dbReference type="InterPro" id="IPR018635">
    <property type="entry name" value="UPF0319"/>
</dbReference>
<dbReference type="NCBIfam" id="NF047712">
    <property type="entry name" value="CrliSynInhib"/>
    <property type="match status" value="1"/>
</dbReference>
<dbReference type="NCBIfam" id="NF002967">
    <property type="entry name" value="PRK03641.1"/>
    <property type="match status" value="1"/>
</dbReference>
<dbReference type="PANTHER" id="PTHR38108">
    <property type="entry name" value="UPF0319 PROTEIN YCCT"/>
    <property type="match status" value="1"/>
</dbReference>
<dbReference type="PANTHER" id="PTHR38108:SF1">
    <property type="entry name" value="UPF0319 PROTEIN YCCT"/>
    <property type="match status" value="1"/>
</dbReference>
<dbReference type="Pfam" id="PF09829">
    <property type="entry name" value="DUF2057"/>
    <property type="match status" value="1"/>
</dbReference>
<keyword id="KW-0732">Signal</keyword>
<reference key="1">
    <citation type="journal article" date="2011" name="J. Bacteriol.">
        <title>Comparative genomics of 28 Salmonella enterica isolates: evidence for CRISPR-mediated adaptive sublineage evolution.</title>
        <authorList>
            <person name="Fricke W.F."/>
            <person name="Mammel M.K."/>
            <person name="McDermott P.F."/>
            <person name="Tartera C."/>
            <person name="White D.G."/>
            <person name="Leclerc J.E."/>
            <person name="Ravel J."/>
            <person name="Cebula T.A."/>
        </authorList>
    </citation>
    <scope>NUCLEOTIDE SEQUENCE [LARGE SCALE GENOMIC DNA]</scope>
    <source>
        <strain>SL483</strain>
    </source>
</reference>
<protein>
    <recommendedName>
        <fullName evidence="1">UPF0319 protein YccT</fullName>
    </recommendedName>
</protein>
<evidence type="ECO:0000255" key="1">
    <source>
        <dbReference type="HAMAP-Rule" id="MF_00789"/>
    </source>
</evidence>
<accession>B5F1W1</accession>
<sequence length="220" mass="24741">MKTGALATFLALCLPVTVFATTLRLSNEVDLLVLDGKKVSSSLLRGAESIELENGPHQLVFRVEKTIRLPGNEERLYISPPLVISFDTQLISQVNFQLPRLENEREASYFNAAPRLALLDGDAMPIPVKLDILAITSTAKVVDYEIETERYNKSAKRASLPQFATMMADDSTLLSDVSELDTVPPQSQTLTEQRLKYWFRLADPQTRHHFLQWAEKQPPS</sequence>
<name>YCCT_SALA4</name>
<comment type="similarity">
    <text evidence="1">Belongs to the UPF0319 family.</text>
</comment>
<organism>
    <name type="scientific">Salmonella agona (strain SL483)</name>
    <dbReference type="NCBI Taxonomy" id="454166"/>
    <lineage>
        <taxon>Bacteria</taxon>
        <taxon>Pseudomonadati</taxon>
        <taxon>Pseudomonadota</taxon>
        <taxon>Gammaproteobacteria</taxon>
        <taxon>Enterobacterales</taxon>
        <taxon>Enterobacteriaceae</taxon>
        <taxon>Salmonella</taxon>
    </lineage>
</organism>
<feature type="signal peptide" evidence="1">
    <location>
        <begin position="1"/>
        <end position="20"/>
    </location>
</feature>
<feature type="chain" id="PRO_1000200492" description="UPF0319 protein YccT">
    <location>
        <begin position="21"/>
        <end position="220"/>
    </location>
</feature>
<gene>
    <name evidence="1" type="primary">yccT</name>
    <name type="ordered locus">SeAg_B1035</name>
</gene>